<proteinExistence type="inferred from homology"/>
<accession>A4IPI2</accession>
<name>MURQ_GEOTN</name>
<reference key="1">
    <citation type="journal article" date="2007" name="Proc. Natl. Acad. Sci. U.S.A.">
        <title>Genome and proteome of long-chain alkane degrading Geobacillus thermodenitrificans NG80-2 isolated from a deep-subsurface oil reservoir.</title>
        <authorList>
            <person name="Feng L."/>
            <person name="Wang W."/>
            <person name="Cheng J."/>
            <person name="Ren Y."/>
            <person name="Zhao G."/>
            <person name="Gao C."/>
            <person name="Tang Y."/>
            <person name="Liu X."/>
            <person name="Han W."/>
            <person name="Peng X."/>
            <person name="Liu R."/>
            <person name="Wang L."/>
        </authorList>
    </citation>
    <scope>NUCLEOTIDE SEQUENCE [LARGE SCALE GENOMIC DNA]</scope>
    <source>
        <strain>NG80-2</strain>
    </source>
</reference>
<protein>
    <recommendedName>
        <fullName evidence="1">N-acetylmuramic acid 6-phosphate etherase</fullName>
        <shortName evidence="1">MurNAc-6-P etherase</shortName>
        <ecNumber evidence="1">4.2.1.126</ecNumber>
    </recommendedName>
    <alternativeName>
        <fullName evidence="1">N-acetylmuramic acid 6-phosphate hydrolase</fullName>
    </alternativeName>
    <alternativeName>
        <fullName evidence="1">N-acetylmuramic acid 6-phosphate lyase</fullName>
    </alternativeName>
</protein>
<gene>
    <name evidence="1" type="primary">murQ</name>
    <name type="ordered locus">GTNG_1878</name>
</gene>
<sequence>MLEHLATEQRNEKTKHLDGMTTREILHVMNEEDRAAVIAVSKQLDCIEKIVHLVIAAFRRGGRLIYVGAGTSGRLGLLDAVECPPTFGTEPSMVQAILAGGLKAISEAVEGAEDDEEAAVRDLQAVGLTKNDVVIGIAASGRTPYVVSALRYAKQIGAATGSIACNKGAVISQYADAAVEIETGPEVLAGSTRLKAGTAQKMVLNMISTASMVGIGKVYGNWMVDVQATNEKLKERAKRILIEATGVSAEEASRYYEQAKGEVKTAIVMILRQCGYEEAKERLQQAEGFVRKALE</sequence>
<comment type="function">
    <text evidence="1">Specifically catalyzes the cleavage of the D-lactyl ether substituent of MurNAc 6-phosphate, producing GlcNAc 6-phosphate and D-lactate.</text>
</comment>
<comment type="catalytic activity">
    <reaction evidence="1">
        <text>N-acetyl-D-muramate 6-phosphate + H2O = N-acetyl-D-glucosamine 6-phosphate + (R)-lactate</text>
        <dbReference type="Rhea" id="RHEA:26410"/>
        <dbReference type="ChEBI" id="CHEBI:15377"/>
        <dbReference type="ChEBI" id="CHEBI:16004"/>
        <dbReference type="ChEBI" id="CHEBI:57513"/>
        <dbReference type="ChEBI" id="CHEBI:58722"/>
        <dbReference type="EC" id="4.2.1.126"/>
    </reaction>
</comment>
<comment type="pathway">
    <text evidence="1">Amino-sugar metabolism; N-acetylmuramate degradation.</text>
</comment>
<comment type="subunit">
    <text evidence="1">Homodimer.</text>
</comment>
<comment type="miscellaneous">
    <text evidence="1">A lyase-type mechanism (elimination/hydration) is suggested for the cleavage of the lactyl ether bond of MurNAc 6-phosphate, with the formation of an alpha,beta-unsaturated aldehyde intermediate with (E)-stereochemistry, followed by the syn addition of water to give product.</text>
</comment>
<comment type="similarity">
    <text evidence="1">Belongs to the GCKR-like family. MurNAc-6-P etherase subfamily.</text>
</comment>
<evidence type="ECO:0000255" key="1">
    <source>
        <dbReference type="HAMAP-Rule" id="MF_00068"/>
    </source>
</evidence>
<organism>
    <name type="scientific">Geobacillus thermodenitrificans (strain NG80-2)</name>
    <dbReference type="NCBI Taxonomy" id="420246"/>
    <lineage>
        <taxon>Bacteria</taxon>
        <taxon>Bacillati</taxon>
        <taxon>Bacillota</taxon>
        <taxon>Bacilli</taxon>
        <taxon>Bacillales</taxon>
        <taxon>Anoxybacillaceae</taxon>
        <taxon>Geobacillus</taxon>
    </lineage>
</organism>
<keyword id="KW-0119">Carbohydrate metabolism</keyword>
<keyword id="KW-0456">Lyase</keyword>
<feature type="chain" id="PRO_1000009118" description="N-acetylmuramic acid 6-phosphate etherase">
    <location>
        <begin position="1"/>
        <end position="295"/>
    </location>
</feature>
<feature type="domain" description="SIS" evidence="1">
    <location>
        <begin position="54"/>
        <end position="217"/>
    </location>
</feature>
<feature type="active site" description="Proton donor" evidence="1">
    <location>
        <position position="82"/>
    </location>
</feature>
<feature type="active site" evidence="1">
    <location>
        <position position="113"/>
    </location>
</feature>
<dbReference type="EC" id="4.2.1.126" evidence="1"/>
<dbReference type="EMBL" id="CP000557">
    <property type="protein sequence ID" value="ABO67236.1"/>
    <property type="molecule type" value="Genomic_DNA"/>
</dbReference>
<dbReference type="RefSeq" id="WP_008880651.1">
    <property type="nucleotide sequence ID" value="NC_009328.1"/>
</dbReference>
<dbReference type="SMR" id="A4IPI2"/>
<dbReference type="GeneID" id="87623962"/>
<dbReference type="KEGG" id="gtn:GTNG_1878"/>
<dbReference type="eggNOG" id="COG2103">
    <property type="taxonomic scope" value="Bacteria"/>
</dbReference>
<dbReference type="HOGENOM" id="CLU_049049_1_1_9"/>
<dbReference type="UniPathway" id="UPA00342"/>
<dbReference type="Proteomes" id="UP000001578">
    <property type="component" value="Chromosome"/>
</dbReference>
<dbReference type="GO" id="GO:0097367">
    <property type="term" value="F:carbohydrate derivative binding"/>
    <property type="evidence" value="ECO:0007669"/>
    <property type="project" value="InterPro"/>
</dbReference>
<dbReference type="GO" id="GO:0016835">
    <property type="term" value="F:carbon-oxygen lyase activity"/>
    <property type="evidence" value="ECO:0007669"/>
    <property type="project" value="UniProtKB-UniRule"/>
</dbReference>
<dbReference type="GO" id="GO:0016803">
    <property type="term" value="F:ether hydrolase activity"/>
    <property type="evidence" value="ECO:0007669"/>
    <property type="project" value="TreeGrafter"/>
</dbReference>
<dbReference type="GO" id="GO:0046348">
    <property type="term" value="P:amino sugar catabolic process"/>
    <property type="evidence" value="ECO:0007669"/>
    <property type="project" value="InterPro"/>
</dbReference>
<dbReference type="GO" id="GO:0097173">
    <property type="term" value="P:N-acetylmuramic acid catabolic process"/>
    <property type="evidence" value="ECO:0007669"/>
    <property type="project" value="UniProtKB-UniPathway"/>
</dbReference>
<dbReference type="GO" id="GO:0009254">
    <property type="term" value="P:peptidoglycan turnover"/>
    <property type="evidence" value="ECO:0007669"/>
    <property type="project" value="TreeGrafter"/>
</dbReference>
<dbReference type="CDD" id="cd05007">
    <property type="entry name" value="SIS_Etherase"/>
    <property type="match status" value="1"/>
</dbReference>
<dbReference type="FunFam" id="1.10.8.1080:FF:000001">
    <property type="entry name" value="N-acetylmuramic acid 6-phosphate etherase"/>
    <property type="match status" value="1"/>
</dbReference>
<dbReference type="FunFam" id="3.40.50.10490:FF:000014">
    <property type="entry name" value="N-acetylmuramic acid 6-phosphate etherase"/>
    <property type="match status" value="1"/>
</dbReference>
<dbReference type="Gene3D" id="1.10.8.1080">
    <property type="match status" value="1"/>
</dbReference>
<dbReference type="Gene3D" id="3.40.50.10490">
    <property type="entry name" value="Glucose-6-phosphate isomerase like protein, domain 1"/>
    <property type="match status" value="1"/>
</dbReference>
<dbReference type="HAMAP" id="MF_00068">
    <property type="entry name" value="MurQ"/>
    <property type="match status" value="1"/>
</dbReference>
<dbReference type="InterPro" id="IPR005488">
    <property type="entry name" value="Etherase_MurQ"/>
</dbReference>
<dbReference type="InterPro" id="IPR005486">
    <property type="entry name" value="Glucokinase_regulatory_CS"/>
</dbReference>
<dbReference type="InterPro" id="IPR040190">
    <property type="entry name" value="MURQ/GCKR"/>
</dbReference>
<dbReference type="InterPro" id="IPR001347">
    <property type="entry name" value="SIS_dom"/>
</dbReference>
<dbReference type="InterPro" id="IPR046348">
    <property type="entry name" value="SIS_dom_sf"/>
</dbReference>
<dbReference type="NCBIfam" id="TIGR00274">
    <property type="entry name" value="N-acetylmuramic acid 6-phosphate etherase"/>
    <property type="match status" value="1"/>
</dbReference>
<dbReference type="NCBIfam" id="NF003915">
    <property type="entry name" value="PRK05441.1"/>
    <property type="match status" value="1"/>
</dbReference>
<dbReference type="NCBIfam" id="NF009222">
    <property type="entry name" value="PRK12570.1"/>
    <property type="match status" value="1"/>
</dbReference>
<dbReference type="PANTHER" id="PTHR10088">
    <property type="entry name" value="GLUCOKINASE REGULATORY PROTEIN"/>
    <property type="match status" value="1"/>
</dbReference>
<dbReference type="PANTHER" id="PTHR10088:SF4">
    <property type="entry name" value="GLUCOKINASE REGULATORY PROTEIN"/>
    <property type="match status" value="1"/>
</dbReference>
<dbReference type="Pfam" id="PF22645">
    <property type="entry name" value="GKRP_SIS_N"/>
    <property type="match status" value="1"/>
</dbReference>
<dbReference type="SUPFAM" id="SSF53697">
    <property type="entry name" value="SIS domain"/>
    <property type="match status" value="1"/>
</dbReference>
<dbReference type="PROSITE" id="PS01272">
    <property type="entry name" value="GCKR"/>
    <property type="match status" value="1"/>
</dbReference>
<dbReference type="PROSITE" id="PS51464">
    <property type="entry name" value="SIS"/>
    <property type="match status" value="1"/>
</dbReference>